<dbReference type="EMBL" id="DP000009">
    <property type="protein sequence ID" value="ABF99066.1"/>
    <property type="molecule type" value="Genomic_DNA"/>
</dbReference>
<dbReference type="EMBL" id="AP008209">
    <property type="protein sequence ID" value="BAF13305.1"/>
    <property type="molecule type" value="Genomic_DNA"/>
</dbReference>
<dbReference type="EMBL" id="AP014959">
    <property type="protein sequence ID" value="BAS86571.1"/>
    <property type="molecule type" value="Genomic_DNA"/>
</dbReference>
<dbReference type="EMBL" id="CM000140">
    <property type="protein sequence ID" value="EEE59998.1"/>
    <property type="molecule type" value="Genomic_DNA"/>
</dbReference>
<dbReference type="EMBL" id="AK106933">
    <property type="protein sequence ID" value="BAG97883.1"/>
    <property type="molecule type" value="mRNA"/>
</dbReference>
<dbReference type="RefSeq" id="XP_015628680.1">
    <property type="nucleotide sequence ID" value="XM_015773194.1"/>
</dbReference>
<dbReference type="FunCoup" id="Q10EJ2">
    <property type="interactions" value="864"/>
</dbReference>
<dbReference type="PaxDb" id="39947-Q10EJ2"/>
<dbReference type="EnsemblPlants" id="Os03t0767900-01">
    <property type="protein sequence ID" value="Os03t0767900-01"/>
    <property type="gene ID" value="Os03g0767900"/>
</dbReference>
<dbReference type="Gramene" id="Os03t0767900-01">
    <property type="protein sequence ID" value="Os03t0767900-01"/>
    <property type="gene ID" value="Os03g0767900"/>
</dbReference>
<dbReference type="KEGG" id="dosa:Os03g0767900"/>
<dbReference type="eggNOG" id="ENOG502RYBF">
    <property type="taxonomic scope" value="Eukaryota"/>
</dbReference>
<dbReference type="HOGENOM" id="CLU_103961_1_0_1"/>
<dbReference type="InParanoid" id="Q10EJ2"/>
<dbReference type="OMA" id="PKFCGRY"/>
<dbReference type="OrthoDB" id="1881155at2759"/>
<dbReference type="Proteomes" id="UP000000763">
    <property type="component" value="Chromosome 3"/>
</dbReference>
<dbReference type="Proteomes" id="UP000007752">
    <property type="component" value="Chromosome 3"/>
</dbReference>
<dbReference type="Proteomes" id="UP000059680">
    <property type="component" value="Chromosome 3"/>
</dbReference>
<dbReference type="GO" id="GO:0016020">
    <property type="term" value="C:membrane"/>
    <property type="evidence" value="ECO:0000318"/>
    <property type="project" value="GO_Central"/>
</dbReference>
<dbReference type="GO" id="GO:0005886">
    <property type="term" value="C:plasma membrane"/>
    <property type="evidence" value="ECO:0007669"/>
    <property type="project" value="UniProtKB-SubCell"/>
</dbReference>
<dbReference type="InterPro" id="IPR006702">
    <property type="entry name" value="CASP_dom"/>
</dbReference>
<dbReference type="InterPro" id="IPR045009">
    <property type="entry name" value="CASPL-5"/>
</dbReference>
<dbReference type="PANTHER" id="PTHR32021">
    <property type="entry name" value="CASP-LIKE PROTEIN 5B3"/>
    <property type="match status" value="1"/>
</dbReference>
<dbReference type="PANTHER" id="PTHR32021:SF30">
    <property type="entry name" value="CASP-LIKE PROTEIN 5C1"/>
    <property type="match status" value="1"/>
</dbReference>
<dbReference type="Pfam" id="PF04535">
    <property type="entry name" value="CASP_dom"/>
    <property type="match status" value="1"/>
</dbReference>
<gene>
    <name type="ordered locus">Os03g0767900</name>
    <name type="ordered locus">LOC_Os03g55870</name>
    <name type="ORF">OsJ_12722</name>
</gene>
<accession>Q10EJ2</accession>
<accession>A0A0P0W3I1</accession>
<proteinExistence type="evidence at transcript level"/>
<keyword id="KW-1003">Cell membrane</keyword>
<keyword id="KW-0472">Membrane</keyword>
<keyword id="KW-1185">Reference proteome</keyword>
<keyword id="KW-0812">Transmembrane</keyword>
<keyword id="KW-1133">Transmembrane helix</keyword>
<feature type="chain" id="PRO_0000418695" description="CASP-like protein 5C1">
    <location>
        <begin position="1"/>
        <end position="156"/>
    </location>
</feature>
<feature type="topological domain" description="Cytoplasmic" evidence="2">
    <location>
        <begin position="1"/>
        <end position="21"/>
    </location>
</feature>
<feature type="transmembrane region" description="Helical" evidence="2">
    <location>
        <begin position="22"/>
        <end position="42"/>
    </location>
</feature>
<feature type="topological domain" description="Extracellular" evidence="2">
    <location>
        <begin position="43"/>
        <end position="46"/>
    </location>
</feature>
<feature type="transmembrane region" description="Helical" evidence="2">
    <location>
        <begin position="47"/>
        <end position="67"/>
    </location>
</feature>
<feature type="topological domain" description="Cytoplasmic" evidence="2">
    <location>
        <begin position="68"/>
        <end position="81"/>
    </location>
</feature>
<feature type="transmembrane region" description="Helical" evidence="2">
    <location>
        <begin position="82"/>
        <end position="102"/>
    </location>
</feature>
<feature type="topological domain" description="Extracellular" evidence="2">
    <location>
        <begin position="103"/>
        <end position="132"/>
    </location>
</feature>
<feature type="transmembrane region" description="Helical" evidence="2">
    <location>
        <begin position="133"/>
        <end position="153"/>
    </location>
</feature>
<feature type="topological domain" description="Cytoplasmic" evidence="2">
    <location>
        <begin position="154"/>
        <end position="156"/>
    </location>
</feature>
<organism>
    <name type="scientific">Oryza sativa subsp. japonica</name>
    <name type="common">Rice</name>
    <dbReference type="NCBI Taxonomy" id="39947"/>
    <lineage>
        <taxon>Eukaryota</taxon>
        <taxon>Viridiplantae</taxon>
        <taxon>Streptophyta</taxon>
        <taxon>Embryophyta</taxon>
        <taxon>Tracheophyta</taxon>
        <taxon>Spermatophyta</taxon>
        <taxon>Magnoliopsida</taxon>
        <taxon>Liliopsida</taxon>
        <taxon>Poales</taxon>
        <taxon>Poaceae</taxon>
        <taxon>BOP clade</taxon>
        <taxon>Oryzoideae</taxon>
        <taxon>Oryzeae</taxon>
        <taxon>Oryzinae</taxon>
        <taxon>Oryza</taxon>
        <taxon>Oryza sativa</taxon>
    </lineage>
</organism>
<protein>
    <recommendedName>
        <fullName>CASP-like protein 5C1</fullName>
        <shortName>OsCASPL5C1</shortName>
    </recommendedName>
</protein>
<sequence>MENRERAGAGAVGSAGSLGLRVGQAVFSSASLLFMSVGVEFFSYTAFCFLVTIMGLVIPWSCTLAMIDVYSILVGCPLRVPGVMVIVVIGDWVLAILSLAAASSSAAVIDLLLQFHGSHCSPRFCGRYQLSAMMAFLSWFLTAASSLFNLWFIASR</sequence>
<name>CSPLU_ORYSJ</name>
<evidence type="ECO:0000250" key="1"/>
<evidence type="ECO:0000255" key="2"/>
<evidence type="ECO:0000305" key="3"/>
<comment type="subunit">
    <text evidence="1">Homodimer and heterodimers.</text>
</comment>
<comment type="subcellular location">
    <subcellularLocation>
        <location evidence="1">Cell membrane</location>
        <topology evidence="1">Multi-pass membrane protein</topology>
    </subcellularLocation>
</comment>
<comment type="similarity">
    <text evidence="3">Belongs to the Casparian strip membrane proteins (CASP) family.</text>
</comment>
<reference key="1">
    <citation type="journal article" date="2005" name="Genome Res.">
        <title>Sequence, annotation, and analysis of synteny between rice chromosome 3 and diverged grass species.</title>
        <authorList>
            <consortium name="The rice chromosome 3 sequencing consortium"/>
            <person name="Buell C.R."/>
            <person name="Yuan Q."/>
            <person name="Ouyang S."/>
            <person name="Liu J."/>
            <person name="Zhu W."/>
            <person name="Wang A."/>
            <person name="Maiti R."/>
            <person name="Haas B."/>
            <person name="Wortman J."/>
            <person name="Pertea M."/>
            <person name="Jones K.M."/>
            <person name="Kim M."/>
            <person name="Overton L."/>
            <person name="Tsitrin T."/>
            <person name="Fadrosh D."/>
            <person name="Bera J."/>
            <person name="Weaver B."/>
            <person name="Jin S."/>
            <person name="Johri S."/>
            <person name="Reardon M."/>
            <person name="Webb K."/>
            <person name="Hill J."/>
            <person name="Moffat K."/>
            <person name="Tallon L."/>
            <person name="Van Aken S."/>
            <person name="Lewis M."/>
            <person name="Utterback T."/>
            <person name="Feldblyum T."/>
            <person name="Zismann V."/>
            <person name="Iobst S."/>
            <person name="Hsiao J."/>
            <person name="de Vazeille A.R."/>
            <person name="Salzberg S.L."/>
            <person name="White O."/>
            <person name="Fraser C.M."/>
            <person name="Yu Y."/>
            <person name="Kim H."/>
            <person name="Rambo T."/>
            <person name="Currie J."/>
            <person name="Collura K."/>
            <person name="Kernodle-Thompson S."/>
            <person name="Wei F."/>
            <person name="Kudrna K."/>
            <person name="Ammiraju J.S.S."/>
            <person name="Luo M."/>
            <person name="Goicoechea J.L."/>
            <person name="Wing R.A."/>
            <person name="Henry D."/>
            <person name="Oates R."/>
            <person name="Palmer M."/>
            <person name="Pries G."/>
            <person name="Saski C."/>
            <person name="Simmons J."/>
            <person name="Soderlund C."/>
            <person name="Nelson W."/>
            <person name="de la Bastide M."/>
            <person name="Spiegel L."/>
            <person name="Nascimento L."/>
            <person name="Huang E."/>
            <person name="Preston R."/>
            <person name="Zutavern T."/>
            <person name="Palmer L."/>
            <person name="O'Shaughnessy A."/>
            <person name="Dike S."/>
            <person name="McCombie W.R."/>
            <person name="Minx P."/>
            <person name="Cordum H."/>
            <person name="Wilson R."/>
            <person name="Jin W."/>
            <person name="Lee H.R."/>
            <person name="Jiang J."/>
            <person name="Jackson S."/>
        </authorList>
    </citation>
    <scope>NUCLEOTIDE SEQUENCE [LARGE SCALE GENOMIC DNA]</scope>
    <source>
        <strain>cv. Nipponbare</strain>
    </source>
</reference>
<reference key="2">
    <citation type="journal article" date="2005" name="Nature">
        <title>The map-based sequence of the rice genome.</title>
        <authorList>
            <consortium name="International rice genome sequencing project (IRGSP)"/>
        </authorList>
    </citation>
    <scope>NUCLEOTIDE SEQUENCE [LARGE SCALE GENOMIC DNA]</scope>
    <source>
        <strain>cv. Nipponbare</strain>
    </source>
</reference>
<reference key="3">
    <citation type="journal article" date="2008" name="Nucleic Acids Res.">
        <title>The rice annotation project database (RAP-DB): 2008 update.</title>
        <authorList>
            <consortium name="The rice annotation project (RAP)"/>
        </authorList>
    </citation>
    <scope>GENOME REANNOTATION</scope>
    <source>
        <strain>cv. Nipponbare</strain>
    </source>
</reference>
<reference key="4">
    <citation type="journal article" date="2013" name="Rice">
        <title>Improvement of the Oryza sativa Nipponbare reference genome using next generation sequence and optical map data.</title>
        <authorList>
            <person name="Kawahara Y."/>
            <person name="de la Bastide M."/>
            <person name="Hamilton J.P."/>
            <person name="Kanamori H."/>
            <person name="McCombie W.R."/>
            <person name="Ouyang S."/>
            <person name="Schwartz D.C."/>
            <person name="Tanaka T."/>
            <person name="Wu J."/>
            <person name="Zhou S."/>
            <person name="Childs K.L."/>
            <person name="Davidson R.M."/>
            <person name="Lin H."/>
            <person name="Quesada-Ocampo L."/>
            <person name="Vaillancourt B."/>
            <person name="Sakai H."/>
            <person name="Lee S.S."/>
            <person name="Kim J."/>
            <person name="Numa H."/>
            <person name="Itoh T."/>
            <person name="Buell C.R."/>
            <person name="Matsumoto T."/>
        </authorList>
    </citation>
    <scope>GENOME REANNOTATION</scope>
    <source>
        <strain>cv. Nipponbare</strain>
    </source>
</reference>
<reference key="5">
    <citation type="journal article" date="2005" name="PLoS Biol.">
        <title>The genomes of Oryza sativa: a history of duplications.</title>
        <authorList>
            <person name="Yu J."/>
            <person name="Wang J."/>
            <person name="Lin W."/>
            <person name="Li S."/>
            <person name="Li H."/>
            <person name="Zhou J."/>
            <person name="Ni P."/>
            <person name="Dong W."/>
            <person name="Hu S."/>
            <person name="Zeng C."/>
            <person name="Zhang J."/>
            <person name="Zhang Y."/>
            <person name="Li R."/>
            <person name="Xu Z."/>
            <person name="Li S."/>
            <person name="Li X."/>
            <person name="Zheng H."/>
            <person name="Cong L."/>
            <person name="Lin L."/>
            <person name="Yin J."/>
            <person name="Geng J."/>
            <person name="Li G."/>
            <person name="Shi J."/>
            <person name="Liu J."/>
            <person name="Lv H."/>
            <person name="Li J."/>
            <person name="Wang J."/>
            <person name="Deng Y."/>
            <person name="Ran L."/>
            <person name="Shi X."/>
            <person name="Wang X."/>
            <person name="Wu Q."/>
            <person name="Li C."/>
            <person name="Ren X."/>
            <person name="Wang J."/>
            <person name="Wang X."/>
            <person name="Li D."/>
            <person name="Liu D."/>
            <person name="Zhang X."/>
            <person name="Ji Z."/>
            <person name="Zhao W."/>
            <person name="Sun Y."/>
            <person name="Zhang Z."/>
            <person name="Bao J."/>
            <person name="Han Y."/>
            <person name="Dong L."/>
            <person name="Ji J."/>
            <person name="Chen P."/>
            <person name="Wu S."/>
            <person name="Liu J."/>
            <person name="Xiao Y."/>
            <person name="Bu D."/>
            <person name="Tan J."/>
            <person name="Yang L."/>
            <person name="Ye C."/>
            <person name="Zhang J."/>
            <person name="Xu J."/>
            <person name="Zhou Y."/>
            <person name="Yu Y."/>
            <person name="Zhang B."/>
            <person name="Zhuang S."/>
            <person name="Wei H."/>
            <person name="Liu B."/>
            <person name="Lei M."/>
            <person name="Yu H."/>
            <person name="Li Y."/>
            <person name="Xu H."/>
            <person name="Wei S."/>
            <person name="He X."/>
            <person name="Fang L."/>
            <person name="Zhang Z."/>
            <person name="Zhang Y."/>
            <person name="Huang X."/>
            <person name="Su Z."/>
            <person name="Tong W."/>
            <person name="Li J."/>
            <person name="Tong Z."/>
            <person name="Li S."/>
            <person name="Ye J."/>
            <person name="Wang L."/>
            <person name="Fang L."/>
            <person name="Lei T."/>
            <person name="Chen C.-S."/>
            <person name="Chen H.-C."/>
            <person name="Xu Z."/>
            <person name="Li H."/>
            <person name="Huang H."/>
            <person name="Zhang F."/>
            <person name="Xu H."/>
            <person name="Li N."/>
            <person name="Zhao C."/>
            <person name="Li S."/>
            <person name="Dong L."/>
            <person name="Huang Y."/>
            <person name="Li L."/>
            <person name="Xi Y."/>
            <person name="Qi Q."/>
            <person name="Li W."/>
            <person name="Zhang B."/>
            <person name="Hu W."/>
            <person name="Zhang Y."/>
            <person name="Tian X."/>
            <person name="Jiao Y."/>
            <person name="Liang X."/>
            <person name="Jin J."/>
            <person name="Gao L."/>
            <person name="Zheng W."/>
            <person name="Hao B."/>
            <person name="Liu S.-M."/>
            <person name="Wang W."/>
            <person name="Yuan L."/>
            <person name="Cao M."/>
            <person name="McDermott J."/>
            <person name="Samudrala R."/>
            <person name="Wang J."/>
            <person name="Wong G.K.-S."/>
            <person name="Yang H."/>
        </authorList>
    </citation>
    <scope>NUCLEOTIDE SEQUENCE [LARGE SCALE GENOMIC DNA]</scope>
    <source>
        <strain>cv. Nipponbare</strain>
    </source>
</reference>
<reference key="6">
    <citation type="journal article" date="2003" name="Science">
        <title>Collection, mapping, and annotation of over 28,000 cDNA clones from japonica rice.</title>
        <authorList>
            <consortium name="The rice full-length cDNA consortium"/>
        </authorList>
    </citation>
    <scope>NUCLEOTIDE SEQUENCE [LARGE SCALE MRNA]</scope>
    <source>
        <strain>cv. Nipponbare</strain>
    </source>
</reference>
<reference key="7">
    <citation type="journal article" date="2014" name="Plant Physiol.">
        <title>Functional and evolutionary analysis of the CASPARIAN STRIP MEMBRANE DOMAIN PROTEIN family.</title>
        <authorList>
            <person name="Roppolo D."/>
            <person name="Boeckmann B."/>
            <person name="Pfister A."/>
            <person name="Boutet E."/>
            <person name="Rubio M.C."/>
            <person name="Denervaud-Tendon V."/>
            <person name="Vermeer J.E."/>
            <person name="Gheyselinck J."/>
            <person name="Xenarios I."/>
            <person name="Geldner N."/>
        </authorList>
    </citation>
    <scope>GENE FAMILY</scope>
    <scope>NOMENCLATURE</scope>
</reference>